<sequence>MVLSDIEIANSVTMEPISKVANQLGIDEEALCLYGKYKAKIDARQLVALKDKPDGKLILVTAISPTPAGEGKTTTSVGLVDALSAIGKKAVIALREPSLGPVFGVKGGAAGGGHAQVVPMEDINLHFTGDFHAIGVANNLLAALIDNHIHHGNSLGIDSRRITWKRVVDMNDRQLRHIVDGLQGKVNGAPREDGYDITVASEIMAILCLSENISDLKARLEKIIIGYNYRGEPVTAKDLKAGGALAALLKDAIHPNLVQTLEHTPALIHGGPFANIAHGCNSVLATKLALKYGDYAVTEAGFGADLGAEKFIDIKCRMSGLRPAAVVLVATIRALKMHGGVPKADLATENVQAVVDGLPNLDKHLANIQDVYGLPVVVAINKFPLDTDAELQAVYDACDKRGVDVVISDVWANGGAGARELAEKVVTLAEQDNQFRFVYEEDDSIETKLTKIVTKVYGGKGITLSPAAKRELADLERLGFGNYPICMAKTQYSFSDDAKKLGAPTDFTVTISNLKVSAGAGFIVALTGAIMTMPGLPKVPASETIDIDEEGNITGLF</sequence>
<protein>
    <recommendedName>
        <fullName evidence="1">Formate--tetrahydrofolate ligase 2</fullName>
        <ecNumber evidence="1">6.3.4.3</ecNumber>
    </recommendedName>
    <alternativeName>
        <fullName evidence="1">Formyltetrahydrofolate synthetase 2</fullName>
        <shortName evidence="1">FHS 2</shortName>
        <shortName evidence="1">FTHFS 2</shortName>
    </alternativeName>
</protein>
<organism>
    <name type="scientific">Streptococcus pyogenes serotype M3 (strain SSI-1)</name>
    <dbReference type="NCBI Taxonomy" id="193567"/>
    <lineage>
        <taxon>Bacteria</taxon>
        <taxon>Bacillati</taxon>
        <taxon>Bacillota</taxon>
        <taxon>Bacilli</taxon>
        <taxon>Lactobacillales</taxon>
        <taxon>Streptococcaceae</taxon>
        <taxon>Streptococcus</taxon>
    </lineage>
</organism>
<gene>
    <name evidence="1" type="primary">fhs2</name>
    <name type="synonym">fhs.2</name>
    <name type="ordered locus">SPs1773</name>
</gene>
<evidence type="ECO:0000255" key="1">
    <source>
        <dbReference type="HAMAP-Rule" id="MF_01543"/>
    </source>
</evidence>
<feature type="chain" id="PRO_0000411586" description="Formate--tetrahydrofolate ligase 2">
    <location>
        <begin position="1"/>
        <end position="557"/>
    </location>
</feature>
<feature type="binding site" evidence="1">
    <location>
        <begin position="66"/>
        <end position="73"/>
    </location>
    <ligand>
        <name>ATP</name>
        <dbReference type="ChEBI" id="CHEBI:30616"/>
    </ligand>
</feature>
<dbReference type="EC" id="6.3.4.3" evidence="1"/>
<dbReference type="EMBL" id="BA000034">
    <property type="protein sequence ID" value="BAC64868.1"/>
    <property type="molecule type" value="Genomic_DNA"/>
</dbReference>
<dbReference type="RefSeq" id="WP_011055075.1">
    <property type="nucleotide sequence ID" value="NC_004606.1"/>
</dbReference>
<dbReference type="SMR" id="P0DF93"/>
<dbReference type="KEGG" id="sps:SPs1773"/>
<dbReference type="HOGENOM" id="CLU_003601_3_3_9"/>
<dbReference type="UniPathway" id="UPA00193"/>
<dbReference type="GO" id="GO:0005524">
    <property type="term" value="F:ATP binding"/>
    <property type="evidence" value="ECO:0007669"/>
    <property type="project" value="UniProtKB-UniRule"/>
</dbReference>
<dbReference type="GO" id="GO:0004329">
    <property type="term" value="F:formate-tetrahydrofolate ligase activity"/>
    <property type="evidence" value="ECO:0007669"/>
    <property type="project" value="UniProtKB-UniRule"/>
</dbReference>
<dbReference type="GO" id="GO:0035999">
    <property type="term" value="P:tetrahydrofolate interconversion"/>
    <property type="evidence" value="ECO:0007669"/>
    <property type="project" value="UniProtKB-UniRule"/>
</dbReference>
<dbReference type="CDD" id="cd00477">
    <property type="entry name" value="FTHFS"/>
    <property type="match status" value="1"/>
</dbReference>
<dbReference type="FunFam" id="3.30.1510.10:FF:000001">
    <property type="entry name" value="Formate--tetrahydrofolate ligase"/>
    <property type="match status" value="1"/>
</dbReference>
<dbReference type="FunFam" id="3.10.410.10:FF:000001">
    <property type="entry name" value="Putative formate--tetrahydrofolate ligase"/>
    <property type="match status" value="1"/>
</dbReference>
<dbReference type="Gene3D" id="3.30.1510.10">
    <property type="entry name" value="Domain 2, N(10)-formyltetrahydrofolate synthetase"/>
    <property type="match status" value="1"/>
</dbReference>
<dbReference type="Gene3D" id="3.10.410.10">
    <property type="entry name" value="Formyltetrahydrofolate synthetase, domain 3"/>
    <property type="match status" value="1"/>
</dbReference>
<dbReference type="Gene3D" id="3.40.50.300">
    <property type="entry name" value="P-loop containing nucleotide triphosphate hydrolases"/>
    <property type="match status" value="1"/>
</dbReference>
<dbReference type="HAMAP" id="MF_01543">
    <property type="entry name" value="FTHFS"/>
    <property type="match status" value="1"/>
</dbReference>
<dbReference type="InterPro" id="IPR000559">
    <property type="entry name" value="Formate_THF_ligase"/>
</dbReference>
<dbReference type="InterPro" id="IPR020628">
    <property type="entry name" value="Formate_THF_ligase_CS"/>
</dbReference>
<dbReference type="InterPro" id="IPR027417">
    <property type="entry name" value="P-loop_NTPase"/>
</dbReference>
<dbReference type="NCBIfam" id="NF010030">
    <property type="entry name" value="PRK13505.1"/>
    <property type="match status" value="1"/>
</dbReference>
<dbReference type="Pfam" id="PF01268">
    <property type="entry name" value="FTHFS"/>
    <property type="match status" value="1"/>
</dbReference>
<dbReference type="SUPFAM" id="SSF52540">
    <property type="entry name" value="P-loop containing nucleoside triphosphate hydrolases"/>
    <property type="match status" value="1"/>
</dbReference>
<dbReference type="PROSITE" id="PS00721">
    <property type="entry name" value="FTHFS_1"/>
    <property type="match status" value="1"/>
</dbReference>
<dbReference type="PROSITE" id="PS00722">
    <property type="entry name" value="FTHFS_2"/>
    <property type="match status" value="1"/>
</dbReference>
<name>FTHS2_STRPQ</name>
<comment type="catalytic activity">
    <reaction evidence="1">
        <text>(6S)-5,6,7,8-tetrahydrofolate + formate + ATP = (6R)-10-formyltetrahydrofolate + ADP + phosphate</text>
        <dbReference type="Rhea" id="RHEA:20221"/>
        <dbReference type="ChEBI" id="CHEBI:15740"/>
        <dbReference type="ChEBI" id="CHEBI:30616"/>
        <dbReference type="ChEBI" id="CHEBI:43474"/>
        <dbReference type="ChEBI" id="CHEBI:57453"/>
        <dbReference type="ChEBI" id="CHEBI:195366"/>
        <dbReference type="ChEBI" id="CHEBI:456216"/>
        <dbReference type="EC" id="6.3.4.3"/>
    </reaction>
</comment>
<comment type="pathway">
    <text evidence="1">One-carbon metabolism; tetrahydrofolate interconversion.</text>
</comment>
<comment type="similarity">
    <text evidence="1">Belongs to the formate--tetrahydrofolate ligase family.</text>
</comment>
<proteinExistence type="inferred from homology"/>
<reference key="1">
    <citation type="journal article" date="2003" name="Genome Res.">
        <title>Genome sequence of an M3 strain of Streptococcus pyogenes reveals a large-scale genomic rearrangement in invasive strains and new insights into phage evolution.</title>
        <authorList>
            <person name="Nakagawa I."/>
            <person name="Kurokawa K."/>
            <person name="Yamashita A."/>
            <person name="Nakata M."/>
            <person name="Tomiyasu Y."/>
            <person name="Okahashi N."/>
            <person name="Kawabata S."/>
            <person name="Yamazaki K."/>
            <person name="Shiba T."/>
            <person name="Yasunaga T."/>
            <person name="Hayashi H."/>
            <person name="Hattori M."/>
            <person name="Hamada S."/>
        </authorList>
    </citation>
    <scope>NUCLEOTIDE SEQUENCE [LARGE SCALE GENOMIC DNA]</scope>
    <source>
        <strain>SSI-1</strain>
    </source>
</reference>
<keyword id="KW-0067">ATP-binding</keyword>
<keyword id="KW-0436">Ligase</keyword>
<keyword id="KW-0547">Nucleotide-binding</keyword>
<keyword id="KW-0554">One-carbon metabolism</keyword>
<accession>P0DF93</accession>
<accession>Q79W25</accession>
<accession>Q8K5L8</accession>